<comment type="function">
    <text evidence="1">Forms part of the ribosomal stalk which helps the ribosome interact with GTP-bound translation factors. Is thus essential for accurate translation.</text>
</comment>
<comment type="subunit">
    <text evidence="1">Homodimer. Part of the ribosomal stalk of the 50S ribosomal subunit. Forms a multimeric L10(L12)X complex, where L10 forms an elongated spine to which 2 to 4 L12 dimers bind in a sequential fashion. Binds GTP-bound translation factors.</text>
</comment>
<comment type="similarity">
    <text evidence="1">Belongs to the bacterial ribosomal protein bL12 family.</text>
</comment>
<keyword id="KW-1185">Reference proteome</keyword>
<keyword id="KW-0687">Ribonucleoprotein</keyword>
<keyword id="KW-0689">Ribosomal protein</keyword>
<sequence>MALSKDDVLNAIAEMSVMDIVELISAMEEKFGVTAAVAAAPAAAGPAAAAAEEKDEFDVVLASFGEKKVGVIKAVREATGLGLKEAKDLVESAPASIKEGVNKAEAEELKKKLEEAGATVELK</sequence>
<proteinExistence type="inferred from homology"/>
<protein>
    <recommendedName>
        <fullName evidence="1">Large ribosomal subunit protein bL12</fullName>
    </recommendedName>
    <alternativeName>
        <fullName evidence="2">50S ribosomal protein L7/L12</fullName>
    </alternativeName>
</protein>
<accession>Q4FQH2</accession>
<gene>
    <name evidence="1" type="primary">rplL</name>
    <name type="ordered locus">Psyc_1888</name>
</gene>
<name>RL7_PSYA2</name>
<dbReference type="EMBL" id="CP000082">
    <property type="protein sequence ID" value="AAZ19736.1"/>
    <property type="molecule type" value="Genomic_DNA"/>
</dbReference>
<dbReference type="RefSeq" id="WP_011281146.1">
    <property type="nucleotide sequence ID" value="NC_007204.1"/>
</dbReference>
<dbReference type="SMR" id="Q4FQH2"/>
<dbReference type="STRING" id="259536.Psyc_1888"/>
<dbReference type="KEGG" id="par:Psyc_1888"/>
<dbReference type="eggNOG" id="COG0222">
    <property type="taxonomic scope" value="Bacteria"/>
</dbReference>
<dbReference type="HOGENOM" id="CLU_086499_3_2_6"/>
<dbReference type="OrthoDB" id="9811748at2"/>
<dbReference type="Proteomes" id="UP000000546">
    <property type="component" value="Chromosome"/>
</dbReference>
<dbReference type="GO" id="GO:0022625">
    <property type="term" value="C:cytosolic large ribosomal subunit"/>
    <property type="evidence" value="ECO:0007669"/>
    <property type="project" value="TreeGrafter"/>
</dbReference>
<dbReference type="GO" id="GO:0003729">
    <property type="term" value="F:mRNA binding"/>
    <property type="evidence" value="ECO:0007669"/>
    <property type="project" value="TreeGrafter"/>
</dbReference>
<dbReference type="GO" id="GO:0003735">
    <property type="term" value="F:structural constituent of ribosome"/>
    <property type="evidence" value="ECO:0007669"/>
    <property type="project" value="InterPro"/>
</dbReference>
<dbReference type="GO" id="GO:0006412">
    <property type="term" value="P:translation"/>
    <property type="evidence" value="ECO:0007669"/>
    <property type="project" value="UniProtKB-UniRule"/>
</dbReference>
<dbReference type="CDD" id="cd00387">
    <property type="entry name" value="Ribosomal_L7_L12"/>
    <property type="match status" value="1"/>
</dbReference>
<dbReference type="FunFam" id="3.30.1390.10:FF:000001">
    <property type="entry name" value="50S ribosomal protein L7/L12"/>
    <property type="match status" value="1"/>
</dbReference>
<dbReference type="Gene3D" id="3.30.1390.10">
    <property type="match status" value="1"/>
</dbReference>
<dbReference type="Gene3D" id="1.20.5.710">
    <property type="entry name" value="Single helix bin"/>
    <property type="match status" value="1"/>
</dbReference>
<dbReference type="HAMAP" id="MF_00368">
    <property type="entry name" value="Ribosomal_bL12"/>
    <property type="match status" value="1"/>
</dbReference>
<dbReference type="InterPro" id="IPR000206">
    <property type="entry name" value="Ribosomal_bL12"/>
</dbReference>
<dbReference type="InterPro" id="IPR013823">
    <property type="entry name" value="Ribosomal_bL12_C"/>
</dbReference>
<dbReference type="InterPro" id="IPR014719">
    <property type="entry name" value="Ribosomal_bL12_C/ClpS-like"/>
</dbReference>
<dbReference type="InterPro" id="IPR008932">
    <property type="entry name" value="Ribosomal_bL12_oligo"/>
</dbReference>
<dbReference type="InterPro" id="IPR036235">
    <property type="entry name" value="Ribosomal_bL12_oligo_N_sf"/>
</dbReference>
<dbReference type="NCBIfam" id="TIGR00855">
    <property type="entry name" value="L12"/>
    <property type="match status" value="1"/>
</dbReference>
<dbReference type="PANTHER" id="PTHR45987">
    <property type="entry name" value="39S RIBOSOMAL PROTEIN L12"/>
    <property type="match status" value="1"/>
</dbReference>
<dbReference type="PANTHER" id="PTHR45987:SF4">
    <property type="entry name" value="LARGE RIBOSOMAL SUBUNIT PROTEIN BL12M"/>
    <property type="match status" value="1"/>
</dbReference>
<dbReference type="Pfam" id="PF00542">
    <property type="entry name" value="Ribosomal_L12"/>
    <property type="match status" value="1"/>
</dbReference>
<dbReference type="Pfam" id="PF16320">
    <property type="entry name" value="Ribosomal_L12_N"/>
    <property type="match status" value="1"/>
</dbReference>
<dbReference type="SUPFAM" id="SSF54736">
    <property type="entry name" value="ClpS-like"/>
    <property type="match status" value="1"/>
</dbReference>
<dbReference type="SUPFAM" id="SSF48300">
    <property type="entry name" value="Ribosomal protein L7/12, oligomerisation (N-terminal) domain"/>
    <property type="match status" value="1"/>
</dbReference>
<organism>
    <name type="scientific">Psychrobacter arcticus (strain DSM 17307 / VKM B-2377 / 273-4)</name>
    <dbReference type="NCBI Taxonomy" id="259536"/>
    <lineage>
        <taxon>Bacteria</taxon>
        <taxon>Pseudomonadati</taxon>
        <taxon>Pseudomonadota</taxon>
        <taxon>Gammaproteobacteria</taxon>
        <taxon>Moraxellales</taxon>
        <taxon>Moraxellaceae</taxon>
        <taxon>Psychrobacter</taxon>
    </lineage>
</organism>
<evidence type="ECO:0000255" key="1">
    <source>
        <dbReference type="HAMAP-Rule" id="MF_00368"/>
    </source>
</evidence>
<evidence type="ECO:0000305" key="2"/>
<reference key="1">
    <citation type="journal article" date="2010" name="Appl. Environ. Microbiol.">
        <title>The genome sequence of Psychrobacter arcticus 273-4, a psychroactive Siberian permafrost bacterium, reveals mechanisms for adaptation to low-temperature growth.</title>
        <authorList>
            <person name="Ayala-del-Rio H.L."/>
            <person name="Chain P.S."/>
            <person name="Grzymski J.J."/>
            <person name="Ponder M.A."/>
            <person name="Ivanova N."/>
            <person name="Bergholz P.W."/>
            <person name="Di Bartolo G."/>
            <person name="Hauser L."/>
            <person name="Land M."/>
            <person name="Bakermans C."/>
            <person name="Rodrigues D."/>
            <person name="Klappenbach J."/>
            <person name="Zarka D."/>
            <person name="Larimer F."/>
            <person name="Richardson P."/>
            <person name="Murray A."/>
            <person name="Thomashow M."/>
            <person name="Tiedje J.M."/>
        </authorList>
    </citation>
    <scope>NUCLEOTIDE SEQUENCE [LARGE SCALE GENOMIC DNA]</scope>
    <source>
        <strain>DSM 17307 / VKM B-2377 / 273-4</strain>
    </source>
</reference>
<feature type="chain" id="PRO_0000243476" description="Large ribosomal subunit protein bL12">
    <location>
        <begin position="1"/>
        <end position="123"/>
    </location>
</feature>